<comment type="function">
    <text evidence="2 4">Involved in a high affinity multicomponent binding-protein-dependent transport system for glycine betaine, carnitine and choline; probably responsible for the translocation of the substrate across the membrane.</text>
</comment>
<comment type="subunit">
    <text evidence="2">The complex is composed of two ATP-binding proteins (OpuCA), two transmembrane proteins (OpuCB and OpuCD) and a solute-binding protein (OpuCC).</text>
</comment>
<comment type="subcellular location">
    <subcellularLocation>
        <location>Cell membrane</location>
        <topology>Multi-pass membrane protein</topology>
    </subcellularLocation>
</comment>
<comment type="induction">
    <text evidence="3">Repressed by OpcR.</text>
</comment>
<comment type="similarity">
    <text evidence="5">Belongs to the binding-protein-dependent transport system permease family. CysTW subfamily.</text>
</comment>
<keyword id="KW-0029">Amino-acid transport</keyword>
<keyword id="KW-1003">Cell membrane</keyword>
<keyword id="KW-0472">Membrane</keyword>
<keyword id="KW-1185">Reference proteome</keyword>
<keyword id="KW-0812">Transmembrane</keyword>
<keyword id="KW-1133">Transmembrane helix</keyword>
<keyword id="KW-0813">Transport</keyword>
<evidence type="ECO:0000255" key="1">
    <source>
        <dbReference type="PROSITE-ProRule" id="PRU00441"/>
    </source>
</evidence>
<evidence type="ECO:0000269" key="2">
    <source>
    </source>
</evidence>
<evidence type="ECO:0000269" key="3">
    <source>
    </source>
</evidence>
<evidence type="ECO:0000269" key="4">
    <source>
    </source>
</evidence>
<evidence type="ECO:0000305" key="5"/>
<sequence>MNQMMTFLQTNGGELLYKTGEHLYISLIAVVLGIIVAVPLGVALTRMKKGAGAVIGFVNIVQTLPSLAILAFFIPLLGVGKVPAIVALFFYSVLPILRNTYTGIKGVNKNLLESGKGIGMTGWEQIRLVEIPLAIPIIMAGIRTSTIYLIGWATLASFIGGGGLGDYIFIGLNLYQPEYIIGGAVPVTILAIIIDYVLAVTERKVTPKGLQGMKEVS</sequence>
<gene>
    <name type="primary">opuCB</name>
    <name type="synonym">yvbD</name>
    <name type="ordered locus">BSU33820</name>
</gene>
<feature type="chain" id="PRO_0000060156" description="Glycine betaine/carnitine/choline transport system permease protein OpuCB">
    <location>
        <begin position="1"/>
        <end position="217"/>
    </location>
</feature>
<feature type="transmembrane region" description="Helical" evidence="1">
    <location>
        <begin position="23"/>
        <end position="43"/>
    </location>
</feature>
<feature type="transmembrane region" description="Helical" evidence="1">
    <location>
        <begin position="52"/>
        <end position="74"/>
    </location>
</feature>
<feature type="transmembrane region" description="Helical" evidence="1">
    <location>
        <begin position="84"/>
        <end position="101"/>
    </location>
</feature>
<feature type="transmembrane region" description="Helical" evidence="1">
    <location>
        <begin position="128"/>
        <end position="148"/>
    </location>
</feature>
<feature type="transmembrane region" description="Helical" evidence="1">
    <location>
        <begin position="150"/>
        <end position="170"/>
    </location>
</feature>
<feature type="transmembrane region" description="Helical" evidence="1">
    <location>
        <begin position="180"/>
        <end position="200"/>
    </location>
</feature>
<feature type="domain" description="ABC transmembrane type-1" evidence="1">
    <location>
        <begin position="19"/>
        <end position="198"/>
    </location>
</feature>
<organism>
    <name type="scientific">Bacillus subtilis (strain 168)</name>
    <dbReference type="NCBI Taxonomy" id="224308"/>
    <lineage>
        <taxon>Bacteria</taxon>
        <taxon>Bacillati</taxon>
        <taxon>Bacillota</taxon>
        <taxon>Bacilli</taxon>
        <taxon>Bacillales</taxon>
        <taxon>Bacillaceae</taxon>
        <taxon>Bacillus</taxon>
    </lineage>
</organism>
<accession>O34878</accession>
<protein>
    <recommendedName>
        <fullName>Glycine betaine/carnitine/choline transport system permease protein OpuCB</fullName>
    </recommendedName>
</protein>
<reference key="1">
    <citation type="journal article" date="1999" name="Mol. Microbiol.">
        <title>Two evolutionarily closely related ABC transporters mediate the uptake of choline for synthesis of the osmoprotectant glycine betaine in Bacillus subtilis.</title>
        <authorList>
            <person name="Kappes R.M."/>
            <person name="Kempf B."/>
            <person name="Kneip S."/>
            <person name="Boch J."/>
            <person name="Gade J."/>
            <person name="Meier-Wagner J."/>
            <person name="Bremer E."/>
        </authorList>
    </citation>
    <scope>NUCLEOTIDE SEQUENCE [GENOMIC DNA]</scope>
    <scope>FUNCTION</scope>
    <scope>SUBUNIT</scope>
    <source>
        <strain>168 / JH642</strain>
    </source>
</reference>
<reference key="2">
    <citation type="journal article" date="1997" name="Nature">
        <title>The complete genome sequence of the Gram-positive bacterium Bacillus subtilis.</title>
        <authorList>
            <person name="Kunst F."/>
            <person name="Ogasawara N."/>
            <person name="Moszer I."/>
            <person name="Albertini A.M."/>
            <person name="Alloni G."/>
            <person name="Azevedo V."/>
            <person name="Bertero M.G."/>
            <person name="Bessieres P."/>
            <person name="Bolotin A."/>
            <person name="Borchert S."/>
            <person name="Borriss R."/>
            <person name="Boursier L."/>
            <person name="Brans A."/>
            <person name="Braun M."/>
            <person name="Brignell S.C."/>
            <person name="Bron S."/>
            <person name="Brouillet S."/>
            <person name="Bruschi C.V."/>
            <person name="Caldwell B."/>
            <person name="Capuano V."/>
            <person name="Carter N.M."/>
            <person name="Choi S.-K."/>
            <person name="Codani J.-J."/>
            <person name="Connerton I.F."/>
            <person name="Cummings N.J."/>
            <person name="Daniel R.A."/>
            <person name="Denizot F."/>
            <person name="Devine K.M."/>
            <person name="Duesterhoeft A."/>
            <person name="Ehrlich S.D."/>
            <person name="Emmerson P.T."/>
            <person name="Entian K.-D."/>
            <person name="Errington J."/>
            <person name="Fabret C."/>
            <person name="Ferrari E."/>
            <person name="Foulger D."/>
            <person name="Fritz C."/>
            <person name="Fujita M."/>
            <person name="Fujita Y."/>
            <person name="Fuma S."/>
            <person name="Galizzi A."/>
            <person name="Galleron N."/>
            <person name="Ghim S.-Y."/>
            <person name="Glaser P."/>
            <person name="Goffeau A."/>
            <person name="Golightly E.J."/>
            <person name="Grandi G."/>
            <person name="Guiseppi G."/>
            <person name="Guy B.J."/>
            <person name="Haga K."/>
            <person name="Haiech J."/>
            <person name="Harwood C.R."/>
            <person name="Henaut A."/>
            <person name="Hilbert H."/>
            <person name="Holsappel S."/>
            <person name="Hosono S."/>
            <person name="Hullo M.-F."/>
            <person name="Itaya M."/>
            <person name="Jones L.-M."/>
            <person name="Joris B."/>
            <person name="Karamata D."/>
            <person name="Kasahara Y."/>
            <person name="Klaerr-Blanchard M."/>
            <person name="Klein C."/>
            <person name="Kobayashi Y."/>
            <person name="Koetter P."/>
            <person name="Koningstein G."/>
            <person name="Krogh S."/>
            <person name="Kumano M."/>
            <person name="Kurita K."/>
            <person name="Lapidus A."/>
            <person name="Lardinois S."/>
            <person name="Lauber J."/>
            <person name="Lazarevic V."/>
            <person name="Lee S.-M."/>
            <person name="Levine A."/>
            <person name="Liu H."/>
            <person name="Masuda S."/>
            <person name="Mauel C."/>
            <person name="Medigue C."/>
            <person name="Medina N."/>
            <person name="Mellado R.P."/>
            <person name="Mizuno M."/>
            <person name="Moestl D."/>
            <person name="Nakai S."/>
            <person name="Noback M."/>
            <person name="Noone D."/>
            <person name="O'Reilly M."/>
            <person name="Ogawa K."/>
            <person name="Ogiwara A."/>
            <person name="Oudega B."/>
            <person name="Park S.-H."/>
            <person name="Parro V."/>
            <person name="Pohl T.M."/>
            <person name="Portetelle D."/>
            <person name="Porwollik S."/>
            <person name="Prescott A.M."/>
            <person name="Presecan E."/>
            <person name="Pujic P."/>
            <person name="Purnelle B."/>
            <person name="Rapoport G."/>
            <person name="Rey M."/>
            <person name="Reynolds S."/>
            <person name="Rieger M."/>
            <person name="Rivolta C."/>
            <person name="Rocha E."/>
            <person name="Roche B."/>
            <person name="Rose M."/>
            <person name="Sadaie Y."/>
            <person name="Sato T."/>
            <person name="Scanlan E."/>
            <person name="Schleich S."/>
            <person name="Schroeter R."/>
            <person name="Scoffone F."/>
            <person name="Sekiguchi J."/>
            <person name="Sekowska A."/>
            <person name="Seror S.J."/>
            <person name="Serror P."/>
            <person name="Shin B.-S."/>
            <person name="Soldo B."/>
            <person name="Sorokin A."/>
            <person name="Tacconi E."/>
            <person name="Takagi T."/>
            <person name="Takahashi H."/>
            <person name="Takemaru K."/>
            <person name="Takeuchi M."/>
            <person name="Tamakoshi A."/>
            <person name="Tanaka T."/>
            <person name="Terpstra P."/>
            <person name="Tognoni A."/>
            <person name="Tosato V."/>
            <person name="Uchiyama S."/>
            <person name="Vandenbol M."/>
            <person name="Vannier F."/>
            <person name="Vassarotti A."/>
            <person name="Viari A."/>
            <person name="Wambutt R."/>
            <person name="Wedler E."/>
            <person name="Wedler H."/>
            <person name="Weitzenegger T."/>
            <person name="Winters P."/>
            <person name="Wipat A."/>
            <person name="Yamamoto H."/>
            <person name="Yamane K."/>
            <person name="Yasumoto K."/>
            <person name="Yata K."/>
            <person name="Yoshida K."/>
            <person name="Yoshikawa H.-F."/>
            <person name="Zumstein E."/>
            <person name="Yoshikawa H."/>
            <person name="Danchin A."/>
        </authorList>
    </citation>
    <scope>NUCLEOTIDE SEQUENCE [LARGE SCALE GENOMIC DNA]</scope>
    <source>
        <strain>168</strain>
    </source>
</reference>
<reference key="3">
    <citation type="journal article" date="1996" name="J. Bacteriol.">
        <title>Three transport systems for the osmoprotectant glycine betaine operate in Bacillus subtilis: characterization of OpuD.</title>
        <authorList>
            <person name="Kappes R."/>
            <person name="Kempf B."/>
            <person name="Bremer E."/>
        </authorList>
    </citation>
    <scope>FUNCTION IN GLYCINE BETAINE TRANSPORT</scope>
    <source>
        <strain>168 / JH642</strain>
    </source>
</reference>
<reference key="4">
    <citation type="journal article" date="2013" name="Microbiology">
        <title>Involvement of OpcR, a GbsR-type transcriptional regulator, in negative regulation of two evolutionarily closely related choline uptake genes in Bacillus subtilis.</title>
        <authorList>
            <person name="Lee C.H."/>
            <person name="Wu T.Y."/>
            <person name="Shaw G.C."/>
        </authorList>
    </citation>
    <scope>INDUCTION</scope>
    <source>
        <strain>168</strain>
    </source>
</reference>
<name>OPUCB_BACSU</name>
<dbReference type="EMBL" id="AF009352">
    <property type="protein sequence ID" value="AAB63769.1"/>
    <property type="molecule type" value="Genomic_DNA"/>
</dbReference>
<dbReference type="EMBL" id="AL009126">
    <property type="protein sequence ID" value="CAB15387.1"/>
    <property type="molecule type" value="Genomic_DNA"/>
</dbReference>
<dbReference type="PIR" id="D69670">
    <property type="entry name" value="D69670"/>
</dbReference>
<dbReference type="RefSeq" id="NP_391262.1">
    <property type="nucleotide sequence ID" value="NC_000964.3"/>
</dbReference>
<dbReference type="RefSeq" id="WP_003228349.1">
    <property type="nucleotide sequence ID" value="NZ_OZ025638.1"/>
</dbReference>
<dbReference type="SMR" id="O34878"/>
<dbReference type="FunCoup" id="O34878">
    <property type="interactions" value="145"/>
</dbReference>
<dbReference type="STRING" id="224308.BSU33820"/>
<dbReference type="TCDB" id="3.A.1.12.4">
    <property type="family name" value="the atp-binding cassette (abc) superfamily"/>
</dbReference>
<dbReference type="PaxDb" id="224308-BSU33820"/>
<dbReference type="EnsemblBacteria" id="CAB15387">
    <property type="protein sequence ID" value="CAB15387"/>
    <property type="gene ID" value="BSU_33820"/>
</dbReference>
<dbReference type="GeneID" id="86872013"/>
<dbReference type="GeneID" id="937105"/>
<dbReference type="KEGG" id="bsu:BSU33820"/>
<dbReference type="PATRIC" id="fig|224308.179.peg.3667"/>
<dbReference type="eggNOG" id="COG1174">
    <property type="taxonomic scope" value="Bacteria"/>
</dbReference>
<dbReference type="InParanoid" id="O34878"/>
<dbReference type="OrthoDB" id="9801163at2"/>
<dbReference type="PhylomeDB" id="O34878"/>
<dbReference type="BioCyc" id="BSUB:BSU33820-MONOMER"/>
<dbReference type="Proteomes" id="UP000001570">
    <property type="component" value="Chromosome"/>
</dbReference>
<dbReference type="GO" id="GO:0005886">
    <property type="term" value="C:plasma membrane"/>
    <property type="evidence" value="ECO:0007669"/>
    <property type="project" value="UniProtKB-SubCell"/>
</dbReference>
<dbReference type="GO" id="GO:0006865">
    <property type="term" value="P:amino acid transport"/>
    <property type="evidence" value="ECO:0007669"/>
    <property type="project" value="UniProtKB-KW"/>
</dbReference>
<dbReference type="GO" id="GO:0031460">
    <property type="term" value="P:glycine betaine transport"/>
    <property type="evidence" value="ECO:0000318"/>
    <property type="project" value="GO_Central"/>
</dbReference>
<dbReference type="GO" id="GO:0055085">
    <property type="term" value="P:transmembrane transport"/>
    <property type="evidence" value="ECO:0007669"/>
    <property type="project" value="InterPro"/>
</dbReference>
<dbReference type="CDD" id="cd06261">
    <property type="entry name" value="TM_PBP2"/>
    <property type="match status" value="1"/>
</dbReference>
<dbReference type="FunFam" id="1.10.3720.10:FF:000001">
    <property type="entry name" value="Glycine betaine ABC transporter, permease"/>
    <property type="match status" value="1"/>
</dbReference>
<dbReference type="Gene3D" id="1.10.3720.10">
    <property type="entry name" value="MetI-like"/>
    <property type="match status" value="1"/>
</dbReference>
<dbReference type="InterPro" id="IPR051204">
    <property type="entry name" value="ABC_transp_perm/SBD"/>
</dbReference>
<dbReference type="InterPro" id="IPR000515">
    <property type="entry name" value="MetI-like"/>
</dbReference>
<dbReference type="InterPro" id="IPR035906">
    <property type="entry name" value="MetI-like_sf"/>
</dbReference>
<dbReference type="PANTHER" id="PTHR30177:SF28">
    <property type="entry name" value="CHOLINE TRANSPORT SYSTEM PERMEASE PROTEIN OPUBB"/>
    <property type="match status" value="1"/>
</dbReference>
<dbReference type="PANTHER" id="PTHR30177">
    <property type="entry name" value="GLYCINE BETAINE/L-PROLINE TRANSPORT SYSTEM PERMEASE PROTEIN PROW"/>
    <property type="match status" value="1"/>
</dbReference>
<dbReference type="Pfam" id="PF00528">
    <property type="entry name" value="BPD_transp_1"/>
    <property type="match status" value="1"/>
</dbReference>
<dbReference type="SUPFAM" id="SSF161098">
    <property type="entry name" value="MetI-like"/>
    <property type="match status" value="1"/>
</dbReference>
<dbReference type="PROSITE" id="PS50928">
    <property type="entry name" value="ABC_TM1"/>
    <property type="match status" value="1"/>
</dbReference>
<proteinExistence type="evidence at protein level"/>